<organism>
    <name type="scientific">Streptomyces coelicolor (strain ATCC BAA-471 / A3(2) / M145)</name>
    <dbReference type="NCBI Taxonomy" id="100226"/>
    <lineage>
        <taxon>Bacteria</taxon>
        <taxon>Bacillati</taxon>
        <taxon>Actinomycetota</taxon>
        <taxon>Actinomycetes</taxon>
        <taxon>Kitasatosporales</taxon>
        <taxon>Streptomycetaceae</taxon>
        <taxon>Streptomyces</taxon>
        <taxon>Streptomyces albidoflavus group</taxon>
    </lineage>
</organism>
<proteinExistence type="inferred from homology"/>
<dbReference type="EC" id="2.3.1.234" evidence="1"/>
<dbReference type="EMBL" id="AL939121">
    <property type="protein sequence ID" value="CAA20408.1"/>
    <property type="molecule type" value="Genomic_DNA"/>
</dbReference>
<dbReference type="PIR" id="T35581">
    <property type="entry name" value="T35581"/>
</dbReference>
<dbReference type="RefSeq" id="NP_628910.1">
    <property type="nucleotide sequence ID" value="NC_003888.3"/>
</dbReference>
<dbReference type="RefSeq" id="WP_011029841.1">
    <property type="nucleotide sequence ID" value="NZ_VNID01000016.1"/>
</dbReference>
<dbReference type="SMR" id="O86793"/>
<dbReference type="FunCoup" id="O86793">
    <property type="interactions" value="407"/>
</dbReference>
<dbReference type="STRING" id="100226.gene:17762401"/>
<dbReference type="PaxDb" id="100226-SCO4752"/>
<dbReference type="GeneID" id="91384286"/>
<dbReference type="KEGG" id="sco:SCO4752"/>
<dbReference type="PATRIC" id="fig|100226.15.peg.4824"/>
<dbReference type="eggNOG" id="COG0533">
    <property type="taxonomic scope" value="Bacteria"/>
</dbReference>
<dbReference type="HOGENOM" id="CLU_023208_0_2_11"/>
<dbReference type="InParanoid" id="O86793"/>
<dbReference type="OrthoDB" id="9806197at2"/>
<dbReference type="PhylomeDB" id="O86793"/>
<dbReference type="Proteomes" id="UP000001973">
    <property type="component" value="Chromosome"/>
</dbReference>
<dbReference type="GO" id="GO:0005737">
    <property type="term" value="C:cytoplasm"/>
    <property type="evidence" value="ECO:0007669"/>
    <property type="project" value="UniProtKB-SubCell"/>
</dbReference>
<dbReference type="GO" id="GO:0005506">
    <property type="term" value="F:iron ion binding"/>
    <property type="evidence" value="ECO:0007669"/>
    <property type="project" value="UniProtKB-UniRule"/>
</dbReference>
<dbReference type="GO" id="GO:0061711">
    <property type="term" value="F:N(6)-L-threonylcarbamoyladenine synthase activity"/>
    <property type="evidence" value="ECO:0007669"/>
    <property type="project" value="UniProtKB-EC"/>
</dbReference>
<dbReference type="GO" id="GO:0002949">
    <property type="term" value="P:tRNA threonylcarbamoyladenosine modification"/>
    <property type="evidence" value="ECO:0007669"/>
    <property type="project" value="UniProtKB-UniRule"/>
</dbReference>
<dbReference type="CDD" id="cd24133">
    <property type="entry name" value="ASKHA_NBD_TsaD_bac"/>
    <property type="match status" value="1"/>
</dbReference>
<dbReference type="FunFam" id="3.30.420.40:FF:000012">
    <property type="entry name" value="tRNA N6-adenosine threonylcarbamoyltransferase"/>
    <property type="match status" value="1"/>
</dbReference>
<dbReference type="FunFam" id="3.30.420.40:FF:000040">
    <property type="entry name" value="tRNA N6-adenosine threonylcarbamoyltransferase"/>
    <property type="match status" value="1"/>
</dbReference>
<dbReference type="Gene3D" id="3.30.420.40">
    <property type="match status" value="2"/>
</dbReference>
<dbReference type="HAMAP" id="MF_01445">
    <property type="entry name" value="TsaD"/>
    <property type="match status" value="1"/>
</dbReference>
<dbReference type="InterPro" id="IPR043129">
    <property type="entry name" value="ATPase_NBD"/>
</dbReference>
<dbReference type="InterPro" id="IPR000905">
    <property type="entry name" value="Gcp-like_dom"/>
</dbReference>
<dbReference type="InterPro" id="IPR017861">
    <property type="entry name" value="KAE1/TsaD"/>
</dbReference>
<dbReference type="InterPro" id="IPR017860">
    <property type="entry name" value="Peptidase_M22_CS"/>
</dbReference>
<dbReference type="InterPro" id="IPR022450">
    <property type="entry name" value="TsaD"/>
</dbReference>
<dbReference type="NCBIfam" id="TIGR00329">
    <property type="entry name" value="gcp_kae1"/>
    <property type="match status" value="1"/>
</dbReference>
<dbReference type="NCBIfam" id="TIGR03723">
    <property type="entry name" value="T6A_TsaD_YgjD"/>
    <property type="match status" value="1"/>
</dbReference>
<dbReference type="PANTHER" id="PTHR11735">
    <property type="entry name" value="TRNA N6-ADENOSINE THREONYLCARBAMOYLTRANSFERASE"/>
    <property type="match status" value="1"/>
</dbReference>
<dbReference type="PANTHER" id="PTHR11735:SF6">
    <property type="entry name" value="TRNA N6-ADENOSINE THREONYLCARBAMOYLTRANSFERASE, MITOCHONDRIAL"/>
    <property type="match status" value="1"/>
</dbReference>
<dbReference type="Pfam" id="PF00814">
    <property type="entry name" value="TsaD"/>
    <property type="match status" value="1"/>
</dbReference>
<dbReference type="PRINTS" id="PR00789">
    <property type="entry name" value="OSIALOPTASE"/>
</dbReference>
<dbReference type="SUPFAM" id="SSF53067">
    <property type="entry name" value="Actin-like ATPase domain"/>
    <property type="match status" value="1"/>
</dbReference>
<dbReference type="PROSITE" id="PS01016">
    <property type="entry name" value="GLYCOPROTEASE"/>
    <property type="match status" value="1"/>
</dbReference>
<evidence type="ECO:0000255" key="1">
    <source>
        <dbReference type="HAMAP-Rule" id="MF_01445"/>
    </source>
</evidence>
<evidence type="ECO:0000256" key="2">
    <source>
        <dbReference type="SAM" id="MobiDB-lite"/>
    </source>
</evidence>
<comment type="function">
    <text evidence="1">Required for the formation of a threonylcarbamoyl group on adenosine at position 37 (t(6)A37) in tRNAs that read codons beginning with adenine. Is involved in the transfer of the threonylcarbamoyl moiety of threonylcarbamoyl-AMP (TC-AMP) to the N6 group of A37, together with TsaE and TsaB. TsaD likely plays a direct catalytic role in this reaction.</text>
</comment>
<comment type="catalytic activity">
    <reaction evidence="1">
        <text>L-threonylcarbamoyladenylate + adenosine(37) in tRNA = N(6)-L-threonylcarbamoyladenosine(37) in tRNA + AMP + H(+)</text>
        <dbReference type="Rhea" id="RHEA:37059"/>
        <dbReference type="Rhea" id="RHEA-COMP:10162"/>
        <dbReference type="Rhea" id="RHEA-COMP:10163"/>
        <dbReference type="ChEBI" id="CHEBI:15378"/>
        <dbReference type="ChEBI" id="CHEBI:73682"/>
        <dbReference type="ChEBI" id="CHEBI:74411"/>
        <dbReference type="ChEBI" id="CHEBI:74418"/>
        <dbReference type="ChEBI" id="CHEBI:456215"/>
        <dbReference type="EC" id="2.3.1.234"/>
    </reaction>
</comment>
<comment type="cofactor">
    <cofactor evidence="1">
        <name>Fe(2+)</name>
        <dbReference type="ChEBI" id="CHEBI:29033"/>
    </cofactor>
    <text evidence="1">Binds 1 Fe(2+) ion per subunit.</text>
</comment>
<comment type="subcellular location">
    <subcellularLocation>
        <location evidence="1">Cytoplasm</location>
    </subcellularLocation>
</comment>
<comment type="similarity">
    <text evidence="1">Belongs to the KAE1 / TsaD family.</text>
</comment>
<accession>O86793</accession>
<gene>
    <name evidence="1" type="primary">tsaD</name>
    <name type="synonym">gcp</name>
    <name type="ordered locus">SCO4752</name>
    <name type="ORF">SC6G4.30</name>
</gene>
<reference key="1">
    <citation type="journal article" date="2002" name="Nature">
        <title>Complete genome sequence of the model actinomycete Streptomyces coelicolor A3(2).</title>
        <authorList>
            <person name="Bentley S.D."/>
            <person name="Chater K.F."/>
            <person name="Cerdeno-Tarraga A.-M."/>
            <person name="Challis G.L."/>
            <person name="Thomson N.R."/>
            <person name="James K.D."/>
            <person name="Harris D.E."/>
            <person name="Quail M.A."/>
            <person name="Kieser H."/>
            <person name="Harper D."/>
            <person name="Bateman A."/>
            <person name="Brown S."/>
            <person name="Chandra G."/>
            <person name="Chen C.W."/>
            <person name="Collins M."/>
            <person name="Cronin A."/>
            <person name="Fraser A."/>
            <person name="Goble A."/>
            <person name="Hidalgo J."/>
            <person name="Hornsby T."/>
            <person name="Howarth S."/>
            <person name="Huang C.-H."/>
            <person name="Kieser T."/>
            <person name="Larke L."/>
            <person name="Murphy L.D."/>
            <person name="Oliver K."/>
            <person name="O'Neil S."/>
            <person name="Rabbinowitsch E."/>
            <person name="Rajandream M.A."/>
            <person name="Rutherford K.M."/>
            <person name="Rutter S."/>
            <person name="Seeger K."/>
            <person name="Saunders D."/>
            <person name="Sharp S."/>
            <person name="Squares R."/>
            <person name="Squares S."/>
            <person name="Taylor K."/>
            <person name="Warren T."/>
            <person name="Wietzorrek A."/>
            <person name="Woodward J.R."/>
            <person name="Barrell B.G."/>
            <person name="Parkhill J."/>
            <person name="Hopwood D.A."/>
        </authorList>
    </citation>
    <scope>NUCLEOTIDE SEQUENCE [LARGE SCALE GENOMIC DNA]</scope>
    <source>
        <strain>ATCC BAA-471 / A3(2) / M145</strain>
    </source>
</reference>
<feature type="chain" id="PRO_0000096973" description="tRNA N6-adenosine threonylcarbamoyltransferase">
    <location>
        <begin position="1"/>
        <end position="374"/>
    </location>
</feature>
<feature type="region of interest" description="Disordered" evidence="2">
    <location>
        <begin position="337"/>
        <end position="374"/>
    </location>
</feature>
<feature type="compositionally biased region" description="Low complexity" evidence="2">
    <location>
        <begin position="337"/>
        <end position="352"/>
    </location>
</feature>
<feature type="compositionally biased region" description="Basic and acidic residues" evidence="2">
    <location>
        <begin position="359"/>
        <end position="374"/>
    </location>
</feature>
<feature type="binding site" evidence="1">
    <location>
        <position position="117"/>
    </location>
    <ligand>
        <name>Fe cation</name>
        <dbReference type="ChEBI" id="CHEBI:24875"/>
    </ligand>
</feature>
<feature type="binding site" evidence="1">
    <location>
        <position position="121"/>
    </location>
    <ligand>
        <name>Fe cation</name>
        <dbReference type="ChEBI" id="CHEBI:24875"/>
    </ligand>
</feature>
<feature type="binding site" evidence="1">
    <location>
        <begin position="140"/>
        <end position="144"/>
    </location>
    <ligand>
        <name>substrate</name>
    </ligand>
</feature>
<feature type="binding site" evidence="1">
    <location>
        <position position="174"/>
    </location>
    <ligand>
        <name>substrate</name>
    </ligand>
</feature>
<feature type="binding site" evidence="1">
    <location>
        <position position="187"/>
    </location>
    <ligand>
        <name>substrate</name>
    </ligand>
</feature>
<feature type="binding site" evidence="1">
    <location>
        <position position="191"/>
    </location>
    <ligand>
        <name>substrate</name>
    </ligand>
</feature>
<feature type="binding site" evidence="1">
    <location>
        <position position="283"/>
    </location>
    <ligand>
        <name>substrate</name>
    </ligand>
</feature>
<feature type="binding site" evidence="1">
    <location>
        <position position="311"/>
    </location>
    <ligand>
        <name>Fe cation</name>
        <dbReference type="ChEBI" id="CHEBI:24875"/>
    </ligand>
</feature>
<protein>
    <recommendedName>
        <fullName evidence="1">tRNA N6-adenosine threonylcarbamoyltransferase</fullName>
        <ecNumber evidence="1">2.3.1.234</ecNumber>
    </recommendedName>
    <alternativeName>
        <fullName evidence="1">N6-L-threonylcarbamoyladenine synthase</fullName>
        <shortName evidence="1">t(6)A synthase</shortName>
    </alternativeName>
    <alternativeName>
        <fullName evidence="1">t(6)A37 threonylcarbamoyladenosine biosynthesis protein TsaD</fullName>
    </alternativeName>
    <alternativeName>
        <fullName evidence="1">tRNA threonylcarbamoyladenosine biosynthesis protein TsaD</fullName>
    </alternativeName>
</protein>
<keyword id="KW-0012">Acyltransferase</keyword>
<keyword id="KW-0963">Cytoplasm</keyword>
<keyword id="KW-0408">Iron</keyword>
<keyword id="KW-0479">Metal-binding</keyword>
<keyword id="KW-1185">Reference proteome</keyword>
<keyword id="KW-0808">Transferase</keyword>
<keyword id="KW-0819">tRNA processing</keyword>
<sequence length="374" mass="38986">MADSRDEPLVLGIETSCDETGVGVVRGTTLLADAVASSVDEHARFGGVVPEVASRAHLEAMVPTIDRALKEAGVSARDLDGIAVTAGPGLAGALLVGVSAAKAYAYALGKPLYGVNHLASHICVDQLEHGALPEPTMALLVSGGHSSLLLSTDITSDVRPLGATIDDAAGEAFDKIARVLNLGFPGGPVIDRYAREGDPNAIAFPRGLTGPRDAAYDFSFSGLKTAVARWIEAKRAAGEEVPVRDVSASFQEAVVDVLTRKAVRACKDEGVDHLMIGGGVAANSRLRALAQERCEAAGIRLRVPRPKLCTDNGAMVAALGAEMVARNRAASDWDLSADSSLPVTEPHVPGQGHPHGHPHGHDHVHEVSKENLYS</sequence>
<name>TSAD_STRCO</name>